<proteinExistence type="inferred from homology"/>
<accession>P24567</accession>
<name>PHOSP_HRSV1</name>
<dbReference type="EMBL" id="D00736">
    <property type="protein sequence ID" value="BAA00638.1"/>
    <property type="molecule type" value="Genomic_RNA"/>
</dbReference>
<dbReference type="PIR" id="A34150">
    <property type="entry name" value="RRNZ18"/>
</dbReference>
<dbReference type="SMR" id="P24567"/>
<dbReference type="DIP" id="DIP-615N"/>
<dbReference type="GO" id="GO:0030430">
    <property type="term" value="C:host cell cytoplasm"/>
    <property type="evidence" value="ECO:0007669"/>
    <property type="project" value="UniProtKB-SubCell"/>
</dbReference>
<dbReference type="GO" id="GO:0044423">
    <property type="term" value="C:virion component"/>
    <property type="evidence" value="ECO:0007669"/>
    <property type="project" value="UniProtKB-KW"/>
</dbReference>
<dbReference type="GO" id="GO:0003968">
    <property type="term" value="F:RNA-directed RNA polymerase activity"/>
    <property type="evidence" value="ECO:0007669"/>
    <property type="project" value="InterPro"/>
</dbReference>
<dbReference type="GO" id="GO:0085034">
    <property type="term" value="P:symbiont-mediated suppression of host NF-kappaB cascade"/>
    <property type="evidence" value="ECO:0007669"/>
    <property type="project" value="UniProtKB-KW"/>
</dbReference>
<dbReference type="InterPro" id="IPR018247">
    <property type="entry name" value="EF_Hand_1_Ca_BS"/>
</dbReference>
<dbReference type="InterPro" id="IPR003487">
    <property type="entry name" value="Pprotein_pneumovir"/>
</dbReference>
<dbReference type="Pfam" id="PF02478">
    <property type="entry name" value="Pneumo_phosprot"/>
    <property type="match status" value="1"/>
</dbReference>
<gene>
    <name type="primary">P</name>
</gene>
<protein>
    <recommendedName>
        <fullName>Phosphoprotein</fullName>
        <shortName>Protein P</shortName>
    </recommendedName>
</protein>
<organismHost>
    <name type="scientific">Homo sapiens</name>
    <name type="common">Human</name>
    <dbReference type="NCBI Taxonomy" id="9606"/>
</organismHost>
<feature type="chain" id="PRO_0000142722" description="Phosphoprotein">
    <location>
        <begin position="1"/>
        <end position="241"/>
    </location>
</feature>
<feature type="region of interest" description="Binding to monomeric RNA-free nucleoprotein" evidence="1">
    <location>
        <begin position="1"/>
        <end position="30"/>
    </location>
</feature>
<feature type="region of interest" description="Important for viral particle assembly" evidence="1">
    <location>
        <begin position="39"/>
        <end position="57"/>
    </location>
</feature>
<feature type="region of interest" description="Disordered" evidence="2">
    <location>
        <begin position="55"/>
        <end position="75"/>
    </location>
</feature>
<feature type="region of interest" description="Binding to host phosphatase PP1" evidence="1">
    <location>
        <begin position="81"/>
        <end position="87"/>
    </location>
</feature>
<feature type="region of interest" description="Binding to protein M2-1" evidence="1">
    <location>
        <begin position="90"/>
        <end position="110"/>
    </location>
</feature>
<feature type="region of interest" description="Oligomerization and binding to RNA-directed RNA polymerase L" evidence="1">
    <location>
        <begin position="120"/>
        <end position="160"/>
    </location>
</feature>
<feature type="region of interest" description="Disordered" evidence="2">
    <location>
        <begin position="201"/>
        <end position="241"/>
    </location>
</feature>
<feature type="region of interest" description="Binding to RNA-directed RNA polymerase L" evidence="1">
    <location>
        <begin position="216"/>
        <end position="232"/>
    </location>
</feature>
<feature type="region of interest" description="Binding to the N-RNA complex" evidence="1">
    <location>
        <begin position="232"/>
        <end position="241"/>
    </location>
</feature>
<feature type="compositionally biased region" description="Polar residues" evidence="2">
    <location>
        <begin position="55"/>
        <end position="64"/>
    </location>
</feature>
<feature type="compositionally biased region" description="Basic and acidic residues" evidence="2">
    <location>
        <begin position="201"/>
        <end position="211"/>
    </location>
</feature>
<feature type="compositionally biased region" description="Polar residues" evidence="2">
    <location>
        <begin position="213"/>
        <end position="222"/>
    </location>
</feature>
<feature type="compositionally biased region" description="Acidic residues" evidence="2">
    <location>
        <begin position="228"/>
        <end position="241"/>
    </location>
</feature>
<feature type="site" description="Interaction with protein M2-1" evidence="1">
    <location>
        <position position="108"/>
    </location>
</feature>
<feature type="modified residue" description="Phosphothreonine; by host" evidence="1">
    <location>
        <position position="108"/>
    </location>
</feature>
<feature type="modified residue" description="Phosphoserine; by host" evidence="1">
    <location>
        <position position="116"/>
    </location>
</feature>
<feature type="modified residue" description="Phosphoserine; by host" evidence="1">
    <location>
        <position position="117"/>
    </location>
</feature>
<feature type="modified residue" description="Phosphoserine; by host" evidence="1">
    <location>
        <position position="119"/>
    </location>
</feature>
<feature type="modified residue" description="Phosphoserine; by host" evidence="1">
    <location>
        <position position="232"/>
    </location>
</feature>
<feature type="modified residue" description="Phosphoserine; by host" evidence="1">
    <location>
        <position position="237"/>
    </location>
</feature>
<organism>
    <name type="scientific">Human respiratory syncytial virus B (strain 18537)</name>
    <dbReference type="NCBI Taxonomy" id="11251"/>
    <lineage>
        <taxon>Viruses</taxon>
        <taxon>Riboviria</taxon>
        <taxon>Orthornavirae</taxon>
        <taxon>Negarnaviricota</taxon>
        <taxon>Haploviricotina</taxon>
        <taxon>Monjiviricetes</taxon>
        <taxon>Mononegavirales</taxon>
        <taxon>Pneumoviridae</taxon>
        <taxon>Orthopneumovirus</taxon>
        <taxon>Orthopneumovirus hominis</taxon>
    </lineage>
</organism>
<evidence type="ECO:0000250" key="1">
    <source>
        <dbReference type="UniProtKB" id="P03421"/>
    </source>
</evidence>
<evidence type="ECO:0000256" key="2">
    <source>
        <dbReference type="SAM" id="MobiDB-lite"/>
    </source>
</evidence>
<evidence type="ECO:0000305" key="3"/>
<comment type="function">
    <text evidence="1">Plays critical roles in regulating RNA replication and transcription through its interactions with multiple proteins. Tethers the RNA-directed RNA polymerase L to the nucleoprotein-RNA complex. Recruits the M2-1 protein, a processivity factor that is required for efficient transcription of viral RNA. Acts as a chaperone for neo-synthesized nucleoprotein by forming an N-P complex that preserves N in a monomeric and RNA-free state and prevents the association of nascent N with host cell RNAs. Recruits the host phosphatase PP1 to inclusion bodies to regulate viral transcription. Together with the nucleoprotein, sequesters host NF-kappa-B in inclusion bodies (IBs) thereby inhibiting this host defense pathway.</text>
</comment>
<comment type="subunit">
    <text evidence="1">Homotetramer. Interacts with protein M2-1; the interaction between the two tetramers is required for the anti-termination and elongation transcriptional activities of protein M2-1. Interacts with host phosphatase PP1; this interaction recruits PP1 to the inclusion bodies. Formation of a complex PP1/M2-1/P allows P to target host PP1 phosphatase to the M2-1 substrate. Interacts (via C-terminus) with the nucleoprotein N (via N-terminus); the phosphorylated phosphoprotein P binds to N-RNA complex. Interacts (via N-terminus) with the monomeric RNA-free nucleoprotein N. Interacts (via C-terminus) with RNA-directed RNA polymerase L; the association of P and L forms the polymerase complex.</text>
</comment>
<comment type="subcellular location">
    <subcellularLocation>
        <location evidence="1">Virion</location>
    </subcellularLocation>
    <subcellularLocation>
        <location evidence="1">Host cytoplasm</location>
    </subcellularLocation>
    <text evidence="1">Localizes in cytoplasmic inclusion bodies.</text>
</comment>
<comment type="domain">
    <text evidence="1">The N-terminus is important for viral particle assembly. The oligomerization region is central. The C-terminus part contains binding regions for the RNA-directed RNA polymerase L and the nucleoprotein.</text>
</comment>
<comment type="PTM">
    <text evidence="1">Constitutively phosphorylated by host. Phosphorylation at S-116, S-117, S-119, S-232 and S-237 is required for transcription inhibition by M2-2 and viral particle egress. Phosphorylation at S-232 and S-237 increases the affinity of the binding to the nucleoprotein.</text>
</comment>
<comment type="similarity">
    <text evidence="3">Belongs to the pneumoviridae phosphoprotein P family.</text>
</comment>
<sequence length="241" mass="26979">MEKFAPEFHGEDANNKATKFLESIKGKFASSKDPKKKDSIISVNSIDIEVTKESPITSGTNIINPISEADSTPEAKANYPRKPLDSFKEDLTPSDNPFSKLYKETIETFDNNEEESSYSYEEINDQTNDNITARLDRIDEKLSEILGMLHTLVVASAGPTSARDGIRDAMVGLREEMIEKIRAEALMTNDRLEAMARLRNEESEKMAKDTSDEVSLNPTSKKLSNLLEDNDSDNDLSLDDF</sequence>
<keyword id="KW-1035">Host cytoplasm</keyword>
<keyword id="KW-0945">Host-virus interaction</keyword>
<keyword id="KW-1100">Inhibition of host NF-kappa-B by virus</keyword>
<keyword id="KW-0597">Phosphoprotein</keyword>
<keyword id="KW-0693">Viral RNA replication</keyword>
<keyword id="KW-0946">Virion</keyword>
<reference key="1">
    <citation type="journal article" date="1990" name="J. Gen. Virol.">
        <title>Sequence comparison of the phosphoprotein mRNAs of antigenic subgroups A and B of human respiratory syncytial virus identifies a highly divergent domain in the predicted protein.</title>
        <authorList>
            <person name="Johnson P.R."/>
            <person name="Collins P.L."/>
        </authorList>
    </citation>
    <scope>NUCLEOTIDE SEQUENCE [GENOMIC RNA]</scope>
</reference>